<comment type="function">
    <text evidence="1">Required for maturation of 30S ribosomal subunits.</text>
</comment>
<comment type="subcellular location">
    <subcellularLocation>
        <location evidence="1">Cytoplasm</location>
    </subcellularLocation>
</comment>
<comment type="similarity">
    <text evidence="1">Belongs to the RimP family.</text>
</comment>
<feature type="chain" id="PRO_1000213488" description="Ribosome maturation factor RimP">
    <location>
        <begin position="1"/>
        <end position="155"/>
    </location>
</feature>
<protein>
    <recommendedName>
        <fullName evidence="1">Ribosome maturation factor RimP</fullName>
    </recommendedName>
</protein>
<gene>
    <name evidence="1" type="primary">rimP</name>
    <name type="ordered locus">Desal_1005</name>
</gene>
<reference key="1">
    <citation type="submission" date="2009-06" db="EMBL/GenBank/DDBJ databases">
        <title>Complete sequence of Desulfovibrio salexigens DSM 2638.</title>
        <authorList>
            <consortium name="US DOE Joint Genome Institute"/>
            <person name="Lucas S."/>
            <person name="Copeland A."/>
            <person name="Lapidus A."/>
            <person name="Glavina del Rio T."/>
            <person name="Tice H."/>
            <person name="Bruce D."/>
            <person name="Goodwin L."/>
            <person name="Pitluck S."/>
            <person name="Munk A.C."/>
            <person name="Brettin T."/>
            <person name="Detter J.C."/>
            <person name="Han C."/>
            <person name="Tapia R."/>
            <person name="Larimer F."/>
            <person name="Land M."/>
            <person name="Hauser L."/>
            <person name="Kyrpides N."/>
            <person name="Anderson I."/>
            <person name="Wall J.D."/>
            <person name="Arkin A.P."/>
            <person name="Dehal P."/>
            <person name="Chivian D."/>
            <person name="Giles B."/>
            <person name="Hazen T.C."/>
        </authorList>
    </citation>
    <scope>NUCLEOTIDE SEQUENCE [LARGE SCALE GENOMIC DNA]</scope>
    <source>
        <strain>ATCC 14822 / DSM 2638 / NCIMB 8403 / VKM B-1763</strain>
    </source>
</reference>
<accession>C6C0D6</accession>
<organism>
    <name type="scientific">Maridesulfovibrio salexigens (strain ATCC 14822 / DSM 2638 / NCIMB 8403 / VKM B-1763)</name>
    <name type="common">Desulfovibrio salexigens</name>
    <dbReference type="NCBI Taxonomy" id="526222"/>
    <lineage>
        <taxon>Bacteria</taxon>
        <taxon>Pseudomonadati</taxon>
        <taxon>Thermodesulfobacteriota</taxon>
        <taxon>Desulfovibrionia</taxon>
        <taxon>Desulfovibrionales</taxon>
        <taxon>Desulfovibrionaceae</taxon>
        <taxon>Maridesulfovibrio</taxon>
    </lineage>
</organism>
<sequence>MEQGSLAKKVSQFVEPTIESMGLTLWGVEVTSANRPAVIIYIDSENGVSIDQCAEVSRDVGLMLEVEEVIDSAYVLEVSSPGLERKFFKPEQMSAYVGKKIDIALVFSLEGRKKFKGLLQETDEEGLLLKLEDQEDPIKIEWDRIKKAKLIHEFK</sequence>
<evidence type="ECO:0000255" key="1">
    <source>
        <dbReference type="HAMAP-Rule" id="MF_01077"/>
    </source>
</evidence>
<dbReference type="EMBL" id="CP001649">
    <property type="protein sequence ID" value="ACS79070.1"/>
    <property type="molecule type" value="Genomic_DNA"/>
</dbReference>
<dbReference type="RefSeq" id="WP_015850889.1">
    <property type="nucleotide sequence ID" value="NC_012881.1"/>
</dbReference>
<dbReference type="SMR" id="C6C0D6"/>
<dbReference type="STRING" id="526222.Desal_1005"/>
<dbReference type="KEGG" id="dsa:Desal_1005"/>
<dbReference type="eggNOG" id="COG0779">
    <property type="taxonomic scope" value="Bacteria"/>
</dbReference>
<dbReference type="HOGENOM" id="CLU_070525_1_1_7"/>
<dbReference type="OrthoDB" id="9805006at2"/>
<dbReference type="Proteomes" id="UP000002601">
    <property type="component" value="Chromosome"/>
</dbReference>
<dbReference type="GO" id="GO:0005829">
    <property type="term" value="C:cytosol"/>
    <property type="evidence" value="ECO:0007669"/>
    <property type="project" value="TreeGrafter"/>
</dbReference>
<dbReference type="GO" id="GO:0000028">
    <property type="term" value="P:ribosomal small subunit assembly"/>
    <property type="evidence" value="ECO:0007669"/>
    <property type="project" value="TreeGrafter"/>
</dbReference>
<dbReference type="GO" id="GO:0006412">
    <property type="term" value="P:translation"/>
    <property type="evidence" value="ECO:0007669"/>
    <property type="project" value="TreeGrafter"/>
</dbReference>
<dbReference type="CDD" id="cd01734">
    <property type="entry name" value="YlxS_C"/>
    <property type="match status" value="1"/>
</dbReference>
<dbReference type="FunFam" id="3.30.300.70:FF:000001">
    <property type="entry name" value="Ribosome maturation factor RimP"/>
    <property type="match status" value="1"/>
</dbReference>
<dbReference type="Gene3D" id="2.30.30.180">
    <property type="entry name" value="Ribosome maturation factor RimP, C-terminal domain"/>
    <property type="match status" value="1"/>
</dbReference>
<dbReference type="Gene3D" id="3.30.300.70">
    <property type="entry name" value="RimP-like superfamily, N-terminal"/>
    <property type="match status" value="1"/>
</dbReference>
<dbReference type="HAMAP" id="MF_01077">
    <property type="entry name" value="RimP"/>
    <property type="match status" value="1"/>
</dbReference>
<dbReference type="InterPro" id="IPR003728">
    <property type="entry name" value="Ribosome_maturation_RimP"/>
</dbReference>
<dbReference type="InterPro" id="IPR028998">
    <property type="entry name" value="RimP_C"/>
</dbReference>
<dbReference type="InterPro" id="IPR036847">
    <property type="entry name" value="RimP_C_sf"/>
</dbReference>
<dbReference type="InterPro" id="IPR028989">
    <property type="entry name" value="RimP_N"/>
</dbReference>
<dbReference type="InterPro" id="IPR035956">
    <property type="entry name" value="RimP_N_sf"/>
</dbReference>
<dbReference type="PANTHER" id="PTHR33867">
    <property type="entry name" value="RIBOSOME MATURATION FACTOR RIMP"/>
    <property type="match status" value="1"/>
</dbReference>
<dbReference type="PANTHER" id="PTHR33867:SF1">
    <property type="entry name" value="RIBOSOME MATURATION FACTOR RIMP"/>
    <property type="match status" value="1"/>
</dbReference>
<dbReference type="Pfam" id="PF17384">
    <property type="entry name" value="DUF150_C"/>
    <property type="match status" value="1"/>
</dbReference>
<dbReference type="Pfam" id="PF02576">
    <property type="entry name" value="RimP_N"/>
    <property type="match status" value="1"/>
</dbReference>
<dbReference type="SUPFAM" id="SSF74942">
    <property type="entry name" value="YhbC-like, C-terminal domain"/>
    <property type="match status" value="1"/>
</dbReference>
<dbReference type="SUPFAM" id="SSF75420">
    <property type="entry name" value="YhbC-like, N-terminal domain"/>
    <property type="match status" value="1"/>
</dbReference>
<keyword id="KW-0963">Cytoplasm</keyword>
<keyword id="KW-1185">Reference proteome</keyword>
<keyword id="KW-0690">Ribosome biogenesis</keyword>
<name>RIMP_MARSD</name>
<proteinExistence type="inferred from homology"/>